<gene>
    <name evidence="1" type="primary">csrA</name>
    <name type="ordered locus">BCI_0204</name>
</gene>
<feature type="chain" id="PRO_1000023363" description="Translational regulator CsrA">
    <location>
        <begin position="1"/>
        <end position="61"/>
    </location>
</feature>
<sequence length="61" mass="6908">MLILTRRVGETLMIGDEVTVTILGIKGNQVRIGVSAPKEVSVHREEIYHRIQFEKSQQSIC</sequence>
<keyword id="KW-0010">Activator</keyword>
<keyword id="KW-0963">Cytoplasm</keyword>
<keyword id="KW-1185">Reference proteome</keyword>
<keyword id="KW-0678">Repressor</keyword>
<keyword id="KW-0694">RNA-binding</keyword>
<keyword id="KW-0810">Translation regulation</keyword>
<name>CSRA_BAUCH</name>
<dbReference type="EMBL" id="CP000238">
    <property type="protein sequence ID" value="ABF13854.1"/>
    <property type="molecule type" value="Genomic_DNA"/>
</dbReference>
<dbReference type="RefSeq" id="WP_011520392.1">
    <property type="nucleotide sequence ID" value="NC_007984.1"/>
</dbReference>
<dbReference type="SMR" id="Q1LTQ5"/>
<dbReference type="STRING" id="374463.BCI_0204"/>
<dbReference type="KEGG" id="bci:BCI_0204"/>
<dbReference type="HOGENOM" id="CLU_164837_2_1_6"/>
<dbReference type="OrthoDB" id="9809061at2"/>
<dbReference type="Proteomes" id="UP000002427">
    <property type="component" value="Chromosome"/>
</dbReference>
<dbReference type="GO" id="GO:0005829">
    <property type="term" value="C:cytosol"/>
    <property type="evidence" value="ECO:0007669"/>
    <property type="project" value="TreeGrafter"/>
</dbReference>
<dbReference type="GO" id="GO:0048027">
    <property type="term" value="F:mRNA 5'-UTR binding"/>
    <property type="evidence" value="ECO:0007669"/>
    <property type="project" value="UniProtKB-UniRule"/>
</dbReference>
<dbReference type="GO" id="GO:0006402">
    <property type="term" value="P:mRNA catabolic process"/>
    <property type="evidence" value="ECO:0007669"/>
    <property type="project" value="InterPro"/>
</dbReference>
<dbReference type="GO" id="GO:0045947">
    <property type="term" value="P:negative regulation of translational initiation"/>
    <property type="evidence" value="ECO:0007669"/>
    <property type="project" value="UniProtKB-UniRule"/>
</dbReference>
<dbReference type="GO" id="GO:0045948">
    <property type="term" value="P:positive regulation of translational initiation"/>
    <property type="evidence" value="ECO:0007669"/>
    <property type="project" value="UniProtKB-UniRule"/>
</dbReference>
<dbReference type="GO" id="GO:0006109">
    <property type="term" value="P:regulation of carbohydrate metabolic process"/>
    <property type="evidence" value="ECO:0007669"/>
    <property type="project" value="UniProtKB-UniRule"/>
</dbReference>
<dbReference type="FunFam" id="2.60.40.4380:FF:000001">
    <property type="entry name" value="Translational regulator CsrA"/>
    <property type="match status" value="1"/>
</dbReference>
<dbReference type="Gene3D" id="2.60.40.4380">
    <property type="entry name" value="Translational regulator CsrA"/>
    <property type="match status" value="1"/>
</dbReference>
<dbReference type="HAMAP" id="MF_00167">
    <property type="entry name" value="CsrA"/>
    <property type="match status" value="1"/>
</dbReference>
<dbReference type="InterPro" id="IPR003751">
    <property type="entry name" value="CsrA"/>
</dbReference>
<dbReference type="InterPro" id="IPR036107">
    <property type="entry name" value="CsrA_sf"/>
</dbReference>
<dbReference type="NCBIfam" id="TIGR00202">
    <property type="entry name" value="csrA"/>
    <property type="match status" value="1"/>
</dbReference>
<dbReference type="NCBIfam" id="NF002469">
    <property type="entry name" value="PRK01712.1"/>
    <property type="match status" value="1"/>
</dbReference>
<dbReference type="PANTHER" id="PTHR34984">
    <property type="entry name" value="CARBON STORAGE REGULATOR"/>
    <property type="match status" value="1"/>
</dbReference>
<dbReference type="PANTHER" id="PTHR34984:SF1">
    <property type="entry name" value="CARBON STORAGE REGULATOR"/>
    <property type="match status" value="1"/>
</dbReference>
<dbReference type="Pfam" id="PF02599">
    <property type="entry name" value="CsrA"/>
    <property type="match status" value="1"/>
</dbReference>
<dbReference type="SUPFAM" id="SSF117130">
    <property type="entry name" value="CsrA-like"/>
    <property type="match status" value="1"/>
</dbReference>
<protein>
    <recommendedName>
        <fullName evidence="1">Translational regulator CsrA</fullName>
    </recommendedName>
    <alternativeName>
        <fullName evidence="1">Carbon storage regulator</fullName>
    </alternativeName>
</protein>
<proteinExistence type="inferred from homology"/>
<organism>
    <name type="scientific">Baumannia cicadellinicola subsp. Homalodisca coagulata</name>
    <dbReference type="NCBI Taxonomy" id="374463"/>
    <lineage>
        <taxon>Bacteria</taxon>
        <taxon>Pseudomonadati</taxon>
        <taxon>Pseudomonadota</taxon>
        <taxon>Gammaproteobacteria</taxon>
        <taxon>Candidatus Palibaumannia</taxon>
    </lineage>
</organism>
<evidence type="ECO:0000255" key="1">
    <source>
        <dbReference type="HAMAP-Rule" id="MF_00167"/>
    </source>
</evidence>
<accession>Q1LTQ5</accession>
<reference key="1">
    <citation type="journal article" date="2006" name="PLoS Biol.">
        <title>Metabolic complementarity and genomics of the dual bacterial symbiosis of sharpshooters.</title>
        <authorList>
            <person name="Wu D."/>
            <person name="Daugherty S.C."/>
            <person name="Van Aken S.E."/>
            <person name="Pai G.H."/>
            <person name="Watkins K.L."/>
            <person name="Khouri H."/>
            <person name="Tallon L.J."/>
            <person name="Zaborsky J.M."/>
            <person name="Dunbar H.E."/>
            <person name="Tran P.L."/>
            <person name="Moran N.A."/>
            <person name="Eisen J.A."/>
        </authorList>
    </citation>
    <scope>NUCLEOTIDE SEQUENCE [LARGE SCALE GENOMIC DNA]</scope>
</reference>
<comment type="function">
    <text evidence="1">A key translational regulator that binds mRNA to regulate translation initiation and/or mRNA stability. Mediates global changes in gene expression, shifting from rapid growth to stress survival by linking envelope stress, the stringent response and the catabolite repression systems. Usually binds in the 5'-UTR; binding at or near the Shine-Dalgarno sequence prevents ribosome-binding, repressing translation, binding elsewhere in the 5'-UTR can activate translation and/or stabilize the mRNA. Its function is antagonized by small RNA(s).</text>
</comment>
<comment type="subunit">
    <text evidence="1">Homodimer; the beta-strands of each monomer intercalate to form a hydrophobic core, while the alpha-helices form wings that extend away from the core.</text>
</comment>
<comment type="subcellular location">
    <subcellularLocation>
        <location evidence="1">Cytoplasm</location>
    </subcellularLocation>
</comment>
<comment type="similarity">
    <text evidence="1">Belongs to the CsrA/RsmA family.</text>
</comment>